<protein>
    <recommendedName>
        <fullName evidence="2">tRNA uridine(34) hydroxylase</fullName>
        <ecNumber evidence="2">1.14.-.-</ecNumber>
    </recommendedName>
    <alternativeName>
        <fullName evidence="2">tRNA hydroxylation protein O</fullName>
    </alternativeName>
</protein>
<reference key="1">
    <citation type="journal article" date="2008" name="DNA Res.">
        <title>Complete genome sequence and comparative analysis of the wild-type commensal Escherichia coli strain SE11 isolated from a healthy adult.</title>
        <authorList>
            <person name="Oshima K."/>
            <person name="Toh H."/>
            <person name="Ogura Y."/>
            <person name="Sasamoto H."/>
            <person name="Morita H."/>
            <person name="Park S.-H."/>
            <person name="Ooka T."/>
            <person name="Iyoda S."/>
            <person name="Taylor T.D."/>
            <person name="Hayashi T."/>
            <person name="Itoh K."/>
            <person name="Hattori M."/>
        </authorList>
    </citation>
    <scope>NUCLEOTIDE SEQUENCE [LARGE SCALE GENOMIC DNA]</scope>
    <source>
        <strain>SE11</strain>
    </source>
</reference>
<keyword id="KW-0560">Oxidoreductase</keyword>
<keyword id="KW-0819">tRNA processing</keyword>
<feature type="chain" id="PRO_1000200354" description="tRNA uridine(34) hydroxylase">
    <location>
        <begin position="1"/>
        <end position="350"/>
    </location>
</feature>
<feature type="domain" description="Rhodanese" evidence="2">
    <location>
        <begin position="146"/>
        <end position="240"/>
    </location>
</feature>
<feature type="active site" description="Cysteine persulfide intermediate" evidence="2">
    <location>
        <position position="200"/>
    </location>
</feature>
<organism>
    <name type="scientific">Escherichia coli (strain SE11)</name>
    <dbReference type="NCBI Taxonomy" id="409438"/>
    <lineage>
        <taxon>Bacteria</taxon>
        <taxon>Pseudomonadati</taxon>
        <taxon>Pseudomonadota</taxon>
        <taxon>Gammaproteobacteria</taxon>
        <taxon>Enterobacterales</taxon>
        <taxon>Enterobacteriaceae</taxon>
        <taxon>Escherichia</taxon>
    </lineage>
</organism>
<accession>B6I9D2</accession>
<proteinExistence type="inferred from homology"/>
<evidence type="ECO:0000250" key="1">
    <source>
        <dbReference type="UniProtKB" id="P24188"/>
    </source>
</evidence>
<evidence type="ECO:0000255" key="2">
    <source>
        <dbReference type="HAMAP-Rule" id="MF_00469"/>
    </source>
</evidence>
<dbReference type="EC" id="1.14.-.-" evidence="2"/>
<dbReference type="EMBL" id="AP009240">
    <property type="protein sequence ID" value="BAG76642.1"/>
    <property type="molecule type" value="Genomic_DNA"/>
</dbReference>
<dbReference type="RefSeq" id="WP_001331275.1">
    <property type="nucleotide sequence ID" value="NC_011415.1"/>
</dbReference>
<dbReference type="SMR" id="B6I9D2"/>
<dbReference type="KEGG" id="ecy:ECSE_1118"/>
<dbReference type="HOGENOM" id="CLU_038878_1_1_6"/>
<dbReference type="Proteomes" id="UP000008199">
    <property type="component" value="Chromosome"/>
</dbReference>
<dbReference type="GO" id="GO:0016705">
    <property type="term" value="F:oxidoreductase activity, acting on paired donors, with incorporation or reduction of molecular oxygen"/>
    <property type="evidence" value="ECO:0007669"/>
    <property type="project" value="UniProtKB-UniRule"/>
</dbReference>
<dbReference type="GO" id="GO:0006400">
    <property type="term" value="P:tRNA modification"/>
    <property type="evidence" value="ECO:0007669"/>
    <property type="project" value="UniProtKB-UniRule"/>
</dbReference>
<dbReference type="CDD" id="cd01518">
    <property type="entry name" value="RHOD_YceA"/>
    <property type="match status" value="1"/>
</dbReference>
<dbReference type="Gene3D" id="3.30.70.100">
    <property type="match status" value="1"/>
</dbReference>
<dbReference type="Gene3D" id="3.40.250.10">
    <property type="entry name" value="Rhodanese-like domain"/>
    <property type="match status" value="1"/>
</dbReference>
<dbReference type="HAMAP" id="MF_00469">
    <property type="entry name" value="TrhO"/>
    <property type="match status" value="1"/>
</dbReference>
<dbReference type="InterPro" id="IPR001763">
    <property type="entry name" value="Rhodanese-like_dom"/>
</dbReference>
<dbReference type="InterPro" id="IPR036873">
    <property type="entry name" value="Rhodanese-like_dom_sf"/>
</dbReference>
<dbReference type="InterPro" id="IPR022111">
    <property type="entry name" value="Rhodanese_C"/>
</dbReference>
<dbReference type="InterPro" id="IPR020936">
    <property type="entry name" value="TrhO"/>
</dbReference>
<dbReference type="InterPro" id="IPR040503">
    <property type="entry name" value="TRHO_N"/>
</dbReference>
<dbReference type="NCBIfam" id="NF001133">
    <property type="entry name" value="PRK00142.1-1"/>
    <property type="match status" value="1"/>
</dbReference>
<dbReference type="PANTHER" id="PTHR43846:SF1">
    <property type="entry name" value="TRNA URIDINE(34) HYDROXYLASE"/>
    <property type="match status" value="1"/>
</dbReference>
<dbReference type="PANTHER" id="PTHR43846">
    <property type="entry name" value="UPF0176 PROTEIN YCEA"/>
    <property type="match status" value="1"/>
</dbReference>
<dbReference type="Pfam" id="PF00581">
    <property type="entry name" value="Rhodanese"/>
    <property type="match status" value="1"/>
</dbReference>
<dbReference type="Pfam" id="PF12368">
    <property type="entry name" value="Rhodanese_C"/>
    <property type="match status" value="1"/>
</dbReference>
<dbReference type="Pfam" id="PF17773">
    <property type="entry name" value="UPF0176_N"/>
    <property type="match status" value="1"/>
</dbReference>
<dbReference type="SMART" id="SM00450">
    <property type="entry name" value="RHOD"/>
    <property type="match status" value="1"/>
</dbReference>
<dbReference type="SUPFAM" id="SSF52821">
    <property type="entry name" value="Rhodanese/Cell cycle control phosphatase"/>
    <property type="match status" value="1"/>
</dbReference>
<dbReference type="PROSITE" id="PS50206">
    <property type="entry name" value="RHODANESE_3"/>
    <property type="match status" value="1"/>
</dbReference>
<name>TRHO_ECOSE</name>
<comment type="function">
    <text evidence="1">Catalyzes oxygen-dependent 5-hydroxyuridine (ho5U) modification at position 34 in tRNAs, the first step in 5-carboxymethoxyuridine (cmo5U) biosynthesis. May be part of an alternate pathway, which is able to bypass cmo5U biogenesis in a subset of tRNAs under aerobic conditions.</text>
</comment>
<comment type="catalytic activity">
    <reaction evidence="2">
        <text>uridine(34) in tRNA + AH2 + O2 = 5-hydroxyuridine(34) in tRNA + A + H2O</text>
        <dbReference type="Rhea" id="RHEA:64224"/>
        <dbReference type="Rhea" id="RHEA-COMP:11727"/>
        <dbReference type="Rhea" id="RHEA-COMP:13381"/>
        <dbReference type="ChEBI" id="CHEBI:13193"/>
        <dbReference type="ChEBI" id="CHEBI:15377"/>
        <dbReference type="ChEBI" id="CHEBI:15379"/>
        <dbReference type="ChEBI" id="CHEBI:17499"/>
        <dbReference type="ChEBI" id="CHEBI:65315"/>
        <dbReference type="ChEBI" id="CHEBI:136877"/>
    </reaction>
</comment>
<comment type="similarity">
    <text evidence="2">Belongs to the TrhO family.</text>
</comment>
<sequence length="350" mass="39807">MPVLHNRISNDALKAKMLAESEPRTTISFYKYFHIADPKVTRDALYQLFTALNVFGRVYLAHEGINAQISVPASNVETFRAQLYDFDPALEGLRLNIALDDDGKSFWVLRMKVRDRIVADGIDDPHFDASNVGEYLQAAEVNAMLDDPDALFIDMRNHYEYEVGHFENALEIPADTFREQLPKAVEMMQAHKDKKIVMYCTGGIRCEKASAWMKHNGFNKVWHIEGGIIEYARKAREQGLPVRFIGKNFVFDERMGERISDEIIAHCHQCGAPCDSHTNCKNDGCHLLFIQCPVCAEKYKGCCSEICCEESALPPEEQRRRRAGRENGNKIFNKSRGRLNTTLGIPDPTE</sequence>
<gene>
    <name evidence="2" type="primary">trhO</name>
    <name type="synonym">yceA</name>
    <name type="ordered locus">ECSE_1118</name>
</gene>